<sequence>MAEHGSRVSLHGFNNLTKSLSFNIYDVCYAKTAEQRHAYIEYIDEVYNAERLTQILTDVADIIGANILNIARQDYEPQGASVTILISEEPVSEAVAEAADQVGPGPLPETVLGHLDKSHITVHTYPESHPDHGVSTFRADIDVSTCGVISPLKALNYLIHSFDSDIVTMDYRVRGFTRDVRGRKHFIDHDINSIQNYLADDTKERYHTIDVNVFQENLFHTKMMVRELDLENYLFGESAGNLEPAERREIERQLRREMTEIFAGRNLAPDQEV</sequence>
<gene>
    <name evidence="1" type="primary">speD</name>
    <name type="ordered locus">Mlg_2244</name>
</gene>
<accession>Q0A6F1</accession>
<feature type="chain" id="PRO_0000273589" description="S-adenosylmethionine decarboxylase beta chain" evidence="1">
    <location>
        <begin position="1"/>
        <end position="117"/>
    </location>
</feature>
<feature type="chain" id="PRO_0000273590" description="S-adenosylmethionine decarboxylase alpha chain" evidence="1">
    <location>
        <begin position="118"/>
        <end position="273"/>
    </location>
</feature>
<feature type="active site" description="Schiff-base intermediate with substrate; via pyruvic acid" evidence="1">
    <location>
        <position position="118"/>
    </location>
</feature>
<feature type="active site" description="Proton acceptor; for processing activity" evidence="1">
    <location>
        <position position="123"/>
    </location>
</feature>
<feature type="active site" description="Proton donor; for catalytic activity" evidence="1">
    <location>
        <position position="146"/>
    </location>
</feature>
<feature type="site" description="Cleavage (non-hydrolytic); by autolysis" evidence="1">
    <location>
        <begin position="117"/>
        <end position="118"/>
    </location>
</feature>
<feature type="modified residue" description="Pyruvic acid (Ser); by autocatalysis" evidence="1">
    <location>
        <position position="118"/>
    </location>
</feature>
<proteinExistence type="inferred from homology"/>
<reference key="1">
    <citation type="submission" date="2006-08" db="EMBL/GenBank/DDBJ databases">
        <title>Complete sequence of Alkalilimnicola ehrilichei MLHE-1.</title>
        <authorList>
            <person name="Copeland A."/>
            <person name="Lucas S."/>
            <person name="Lapidus A."/>
            <person name="Barry K."/>
            <person name="Detter J.C."/>
            <person name="Glavina del Rio T."/>
            <person name="Hammon N."/>
            <person name="Israni S."/>
            <person name="Dalin E."/>
            <person name="Tice H."/>
            <person name="Pitluck S."/>
            <person name="Sims D."/>
            <person name="Brettin T."/>
            <person name="Bruce D."/>
            <person name="Han C."/>
            <person name="Tapia R."/>
            <person name="Gilna P."/>
            <person name="Schmutz J."/>
            <person name="Larimer F."/>
            <person name="Land M."/>
            <person name="Hauser L."/>
            <person name="Kyrpides N."/>
            <person name="Mikhailova N."/>
            <person name="Oremland R.S."/>
            <person name="Hoeft S.E."/>
            <person name="Switzer-Blum J."/>
            <person name="Kulp T."/>
            <person name="King G."/>
            <person name="Tabita R."/>
            <person name="Witte B."/>
            <person name="Santini J.M."/>
            <person name="Basu P."/>
            <person name="Hollibaugh J.T."/>
            <person name="Xie G."/>
            <person name="Stolz J.F."/>
            <person name="Richardson P."/>
        </authorList>
    </citation>
    <scope>NUCLEOTIDE SEQUENCE [LARGE SCALE GENOMIC DNA]</scope>
    <source>
        <strain>ATCC BAA-1101 / DSM 17681 / MLHE-1</strain>
    </source>
</reference>
<organism>
    <name type="scientific">Alkalilimnicola ehrlichii (strain ATCC BAA-1101 / DSM 17681 / MLHE-1)</name>
    <dbReference type="NCBI Taxonomy" id="187272"/>
    <lineage>
        <taxon>Bacteria</taxon>
        <taxon>Pseudomonadati</taxon>
        <taxon>Pseudomonadota</taxon>
        <taxon>Gammaproteobacteria</taxon>
        <taxon>Chromatiales</taxon>
        <taxon>Ectothiorhodospiraceae</taxon>
        <taxon>Alkalilimnicola</taxon>
    </lineage>
</organism>
<name>SPED_ALKEH</name>
<keyword id="KW-0068">Autocatalytic cleavage</keyword>
<keyword id="KW-0210">Decarboxylase</keyword>
<keyword id="KW-0456">Lyase</keyword>
<keyword id="KW-0620">Polyamine biosynthesis</keyword>
<keyword id="KW-0670">Pyruvate</keyword>
<keyword id="KW-1185">Reference proteome</keyword>
<keyword id="KW-0949">S-adenosyl-L-methionine</keyword>
<keyword id="KW-0704">Schiff base</keyword>
<keyword id="KW-0745">Spermidine biosynthesis</keyword>
<keyword id="KW-0865">Zymogen</keyword>
<dbReference type="EC" id="4.1.1.50" evidence="1"/>
<dbReference type="EMBL" id="CP000453">
    <property type="protein sequence ID" value="ABI57586.1"/>
    <property type="molecule type" value="Genomic_DNA"/>
</dbReference>
<dbReference type="RefSeq" id="WP_011629980.1">
    <property type="nucleotide sequence ID" value="NC_008340.1"/>
</dbReference>
<dbReference type="SMR" id="Q0A6F1"/>
<dbReference type="KEGG" id="aeh:Mlg_2244"/>
<dbReference type="eggNOG" id="COG1586">
    <property type="taxonomic scope" value="Bacteria"/>
</dbReference>
<dbReference type="HOGENOM" id="CLU_092007_0_0_6"/>
<dbReference type="OrthoDB" id="5290709at2"/>
<dbReference type="UniPathway" id="UPA00331">
    <property type="reaction ID" value="UER00451"/>
</dbReference>
<dbReference type="Proteomes" id="UP000001962">
    <property type="component" value="Chromosome"/>
</dbReference>
<dbReference type="GO" id="GO:0005829">
    <property type="term" value="C:cytosol"/>
    <property type="evidence" value="ECO:0007669"/>
    <property type="project" value="TreeGrafter"/>
</dbReference>
<dbReference type="GO" id="GO:0004014">
    <property type="term" value="F:adenosylmethionine decarboxylase activity"/>
    <property type="evidence" value="ECO:0007669"/>
    <property type="project" value="UniProtKB-UniRule"/>
</dbReference>
<dbReference type="GO" id="GO:0008295">
    <property type="term" value="P:spermidine biosynthetic process"/>
    <property type="evidence" value="ECO:0007669"/>
    <property type="project" value="UniProtKB-UniRule"/>
</dbReference>
<dbReference type="FunFam" id="3.60.90.10:FF:000001">
    <property type="entry name" value="S-adenosylmethionine decarboxylase proenzyme"/>
    <property type="match status" value="1"/>
</dbReference>
<dbReference type="Gene3D" id="3.60.90.10">
    <property type="entry name" value="S-adenosylmethionine decarboxylase"/>
    <property type="match status" value="1"/>
</dbReference>
<dbReference type="HAMAP" id="MF_00465">
    <property type="entry name" value="AdoMetDC_2"/>
    <property type="match status" value="1"/>
</dbReference>
<dbReference type="InterPro" id="IPR003826">
    <property type="entry name" value="AdoMetDC_fam_prok"/>
</dbReference>
<dbReference type="InterPro" id="IPR009165">
    <property type="entry name" value="S-AdoMet_deCO2ase_bac"/>
</dbReference>
<dbReference type="InterPro" id="IPR016067">
    <property type="entry name" value="S-AdoMet_deCO2ase_core"/>
</dbReference>
<dbReference type="NCBIfam" id="TIGR03331">
    <property type="entry name" value="SAM_DCase_Eco"/>
    <property type="match status" value="1"/>
</dbReference>
<dbReference type="PANTHER" id="PTHR33866">
    <property type="entry name" value="S-ADENOSYLMETHIONINE DECARBOXYLASE PROENZYME"/>
    <property type="match status" value="1"/>
</dbReference>
<dbReference type="PANTHER" id="PTHR33866:SF1">
    <property type="entry name" value="S-ADENOSYLMETHIONINE DECARBOXYLASE PROENZYME"/>
    <property type="match status" value="1"/>
</dbReference>
<dbReference type="Pfam" id="PF02675">
    <property type="entry name" value="AdoMet_dc"/>
    <property type="match status" value="1"/>
</dbReference>
<dbReference type="PIRSF" id="PIRSF001356">
    <property type="entry name" value="SAM_decarboxylas"/>
    <property type="match status" value="1"/>
</dbReference>
<dbReference type="SUPFAM" id="SSF56276">
    <property type="entry name" value="S-adenosylmethionine decarboxylase"/>
    <property type="match status" value="1"/>
</dbReference>
<comment type="function">
    <text evidence="1">Catalyzes the decarboxylation of S-adenosylmethionine to S-adenosylmethioninamine (dcAdoMet), the propylamine donor required for the synthesis of the polyamines spermine and spermidine from the diamine putrescine.</text>
</comment>
<comment type="catalytic activity">
    <reaction evidence="1">
        <text>S-adenosyl-L-methionine + H(+) = S-adenosyl 3-(methylsulfanyl)propylamine + CO2</text>
        <dbReference type="Rhea" id="RHEA:15981"/>
        <dbReference type="ChEBI" id="CHEBI:15378"/>
        <dbReference type="ChEBI" id="CHEBI:16526"/>
        <dbReference type="ChEBI" id="CHEBI:57443"/>
        <dbReference type="ChEBI" id="CHEBI:59789"/>
        <dbReference type="EC" id="4.1.1.50"/>
    </reaction>
</comment>
<comment type="cofactor">
    <cofactor evidence="1">
        <name>pyruvate</name>
        <dbReference type="ChEBI" id="CHEBI:15361"/>
    </cofactor>
    <text evidence="1">Binds 1 pyruvoyl group covalently per subunit.</text>
</comment>
<comment type="pathway">
    <text evidence="1">Amine and polyamine biosynthesis; S-adenosylmethioninamine biosynthesis; S-adenosylmethioninamine from S-adenosyl-L-methionine: step 1/1.</text>
</comment>
<comment type="subunit">
    <text evidence="1">Heterooctamer of four alpha and four beta chains arranged as a tetramer of alpha/beta heterodimers.</text>
</comment>
<comment type="PTM">
    <text evidence="1">Is synthesized initially as an inactive proenzyme. Formation of the active enzyme involves a self-maturation process in which the active site pyruvoyl group is generated from an internal serine residue via an autocatalytic post-translational modification. Two non-identical subunits are generated from the proenzyme in this reaction, and the pyruvate is formed at the N-terminus of the alpha chain, which is derived from the carboxyl end of the proenzyme. The post-translation cleavage follows an unusual pathway, termed non-hydrolytic serinolysis, in which the side chain hydroxyl group of the serine supplies its oxygen atom to form the C-terminus of the beta chain, while the remainder of the serine residue undergoes an oxidative deamination to produce ammonia and the pyruvoyl group blocking the N-terminus of the alpha chain.</text>
</comment>
<comment type="similarity">
    <text evidence="1">Belongs to the prokaryotic AdoMetDC family. Type 2 subfamily.</text>
</comment>
<evidence type="ECO:0000255" key="1">
    <source>
        <dbReference type="HAMAP-Rule" id="MF_00465"/>
    </source>
</evidence>
<protein>
    <recommendedName>
        <fullName evidence="1">S-adenosylmethionine decarboxylase proenzyme</fullName>
        <shortName evidence="1">AdoMetDC</shortName>
        <shortName evidence="1">SAMDC</shortName>
        <ecNumber evidence="1">4.1.1.50</ecNumber>
    </recommendedName>
    <component>
        <recommendedName>
            <fullName evidence="1">S-adenosylmethionine decarboxylase beta chain</fullName>
        </recommendedName>
    </component>
    <component>
        <recommendedName>
            <fullName evidence="1">S-adenosylmethionine decarboxylase alpha chain</fullName>
        </recommendedName>
    </component>
</protein>